<protein>
    <recommendedName>
        <fullName>Division abnormally delayed protein</fullName>
        <shortName>Dally protein</shortName>
    </recommendedName>
</protein>
<comment type="function">
    <text evidence="4 5 6">Cell surface proteoglycan that bears heparan sulfate (PubMed:35609633, PubMed:8582281). Functions as a coreceptor for growth factors and morphogens, such as the products of dpp, to regulate signaling and distribution of these ligands (PubMed:35609633, PubMed:8582281). Required for cell division patterning during postembryonic development of the nervous system (PubMed:8582281). Plays a role in dpp/BMP signaling possibly by stabilizing dpp and thereby creating a morphological gradient during wing development (PubMed:35609633). Might have a role in testis development (PubMed:35609633). Functions with magu and fwe in a mechanism of scaling, which utilises apoptosis to ensure that the dpp patterning gradient remains proportional to the size of the growing wing (PubMed:35301437). In this mechanism, fwe represses dally and Magu-dependent activity in expanding the gradient, and dally/Magu inhibits fwe-dependent apoptosis to keep cell death rate low (PubMed:35301437). When the levels of these different proteins are optimally regulated the gradient correctly scales with organ growth but when this fails, fwe-mediated apoptosis is activated to trim the developing tissue to match the correct size of the gradient (PubMed:35301437).</text>
</comment>
<comment type="subunit">
    <text evidence="4 5">Interacts with nord; the interaction promotes dally degradation (PubMed:35609633). Interacts with Magu (PubMed:35301437). As part of the dally/ Magu complex, associates with fwe (isoforms ubi, LoseA and LoseB) and is unable to interact with fwe independently of Magu (PubMed:35301437).</text>
</comment>
<comment type="subcellular location">
    <subcellularLocation>
        <location evidence="5">Cell membrane</location>
        <topology evidence="7">Lipid-anchor</topology>
        <topology evidence="7">GPI-anchor</topology>
        <orientation evidence="7">Extracellular side</orientation>
    </subcellularLocation>
    <text evidence="5">Localizes to the apical side of wing disk epithelia.</text>
</comment>
<comment type="developmental stage">
    <text evidence="4 5">Expressed ubiquitously with elevated signal at the anterior-posterior (A/P) and dorsoventral (D/V) compartment boundaries and in peripheral wing disk cells (at protein level).</text>
</comment>
<comment type="similarity">
    <text evidence="7">Belongs to the glypican family.</text>
</comment>
<sequence length="626" mass="69031">MAARSVRLAQLLLFTLLCGFVGLSAAKHLDLDGIHHHQHHLHSATTHHRRRLQRDSRAKDAVGGSTHQCDAVKSYFESIDIKSSGTYSEKGAICGGNCCNNATELELRDKAAGMFEQLLHHHTSSLRGVLETNAKQFQSHVLELAQISENMTHSLFSKVYTRMVPSSRMMIHQLYTEIMNHLIYTSNYTNSNGQLGRRGIGSVQSNLEEAVRHFFVQLFPVAYHQMVHLSKNNLGDLHEDYVNCLQHNFDEMHPFGDIPQQVQSNLGKSVHMSNVFMNALLQAAEVLSEADALYGEQLTDTCKLHLLKMHYCPNCNGHHSSSRSETKLCYGYCKNVMRGCSAEYAGLLDSPWSGVVDSLNNLVTTHILSDTGIINVIKHLQTYFSEAIMAAMHNGPELEKKVKKTCGTPSLTPYSSGEPDARPPPHKNNVKWATDPDPGMVLFLSTIDKSKEFYTTIVDNFCDEQQHSRDDHSCWSGDRFGDYTQLLINPGTDSQRYNPEVPFNAKAQTGKLNELVDKLFKIRKSIGAAAPSNSIQATHDIQNDMGEGSGGGEGQIGDDEEEYGGAHGSGDGSGDGPHTPIEESEGTTTNEVESRDSGKTSGSNPLEGTATWMLLTLVTMLFSSCS</sequence>
<organism>
    <name type="scientific">Drosophila melanogaster</name>
    <name type="common">Fruit fly</name>
    <dbReference type="NCBI Taxonomy" id="7227"/>
    <lineage>
        <taxon>Eukaryota</taxon>
        <taxon>Metazoa</taxon>
        <taxon>Ecdysozoa</taxon>
        <taxon>Arthropoda</taxon>
        <taxon>Hexapoda</taxon>
        <taxon>Insecta</taxon>
        <taxon>Pterygota</taxon>
        <taxon>Neoptera</taxon>
        <taxon>Endopterygota</taxon>
        <taxon>Diptera</taxon>
        <taxon>Brachycera</taxon>
        <taxon>Muscomorpha</taxon>
        <taxon>Ephydroidea</taxon>
        <taxon>Drosophilidae</taxon>
        <taxon>Drosophila</taxon>
        <taxon>Sophophora</taxon>
    </lineage>
</organism>
<gene>
    <name type="primary">dally</name>
    <name type="ORF">CG4974</name>
</gene>
<feature type="signal peptide" evidence="1">
    <location>
        <begin position="1"/>
        <end position="26"/>
    </location>
</feature>
<feature type="chain" id="PRO_0000012327" description="Division abnormally delayed protein">
    <location>
        <begin position="27"/>
        <end position="602"/>
    </location>
</feature>
<feature type="propeptide" id="PRO_0000012328" description="Removed in mature form" evidence="1">
    <location>
        <begin position="603"/>
        <end position="626"/>
    </location>
</feature>
<feature type="region of interest" description="Disordered" evidence="2">
    <location>
        <begin position="41"/>
        <end position="65"/>
    </location>
</feature>
<feature type="region of interest" description="Disordered" evidence="2">
    <location>
        <begin position="533"/>
        <end position="607"/>
    </location>
</feature>
<feature type="compositionally biased region" description="Basic residues" evidence="2">
    <location>
        <begin position="41"/>
        <end position="52"/>
    </location>
</feature>
<feature type="compositionally biased region" description="Gly residues" evidence="2">
    <location>
        <begin position="565"/>
        <end position="575"/>
    </location>
</feature>
<feature type="lipid moiety-binding region" description="GPI-anchor amidated glycine" evidence="1">
    <location>
        <position position="602"/>
    </location>
</feature>
<feature type="glycosylation site" description="N-linked (GlcNAc...) asparagine; atypical" evidence="3">
    <location>
        <position position="97"/>
    </location>
</feature>
<feature type="glycosylation site" description="N-linked (GlcNAc...) asparagine" evidence="3">
    <location>
        <position position="101"/>
    </location>
</feature>
<feature type="glycosylation site" description="N-linked (GlcNAc...) asparagine" evidence="1">
    <location>
        <position position="150"/>
    </location>
</feature>
<feature type="glycosylation site" description="N-linked (GlcNAc...) asparagine" evidence="1">
    <location>
        <position position="187"/>
    </location>
</feature>
<feature type="glycosylation site" description="O-linked (Xyl...) (heparan sulfate) serine" evidence="1">
    <location>
        <position position="549"/>
    </location>
</feature>
<feature type="glycosylation site" description="O-linked (Xyl...) (heparan sulfate) serine" evidence="1">
    <location>
        <position position="569"/>
    </location>
</feature>
<feature type="glycosylation site" description="O-linked (Xyl...) (heparan sulfate) serine" evidence="1">
    <location>
        <position position="573"/>
    </location>
</feature>
<feature type="glycosylation site" description="O-linked (Xyl...) (heparan sulfate) serine" evidence="1">
    <location>
        <position position="601"/>
    </location>
</feature>
<feature type="mutagenesis site" description="Lack of heparan sulfate glycosaminoglycan modification. Does not affect binding to nord; when associated with A-569 and A-573." evidence="5">
    <original>S</original>
    <variation>A</variation>
    <location>
        <position position="549"/>
    </location>
</feature>
<feature type="mutagenesis site" description="Lack of heparan sulfate glycosaminoglycan modification. Does not affect binding to nord; when associated with A-549 and A-573." evidence="5">
    <original>S</original>
    <variation>A</variation>
    <location>
        <position position="569"/>
    </location>
</feature>
<feature type="mutagenesis site" description="Lack of heparan sulfate glycosaminoglycan modification. Does not affect binding to nord; when associated with A-549 and A-569." evidence="5">
    <original>S</original>
    <variation>A</variation>
    <location>
        <position position="573"/>
    </location>
</feature>
<evidence type="ECO:0000255" key="1"/>
<evidence type="ECO:0000256" key="2">
    <source>
        <dbReference type="SAM" id="MobiDB-lite"/>
    </source>
</evidence>
<evidence type="ECO:0000269" key="3">
    <source>
    </source>
</evidence>
<evidence type="ECO:0000269" key="4">
    <source>
    </source>
</evidence>
<evidence type="ECO:0000269" key="5">
    <source>
    </source>
</evidence>
<evidence type="ECO:0000269" key="6">
    <source>
    </source>
</evidence>
<evidence type="ECO:0000305" key="7"/>
<reference key="1">
    <citation type="journal article" date="1995" name="Development">
        <title>The division abnormally delayed (dally) gene: a putative integral membrane proteoglycan required for cell division patterning during postembryonic development of the nervous system in Drosophila.</title>
        <authorList>
            <person name="Nakato H."/>
            <person name="Futch T.A."/>
            <person name="Selleck S.B."/>
        </authorList>
    </citation>
    <scope>NUCLEOTIDE SEQUENCE [MRNA]</scope>
    <scope>FUNCTION</scope>
</reference>
<reference key="2">
    <citation type="journal article" date="2000" name="Science">
        <title>The genome sequence of Drosophila melanogaster.</title>
        <authorList>
            <person name="Adams M.D."/>
            <person name="Celniker S.E."/>
            <person name="Holt R.A."/>
            <person name="Evans C.A."/>
            <person name="Gocayne J.D."/>
            <person name="Amanatides P.G."/>
            <person name="Scherer S.E."/>
            <person name="Li P.W."/>
            <person name="Hoskins R.A."/>
            <person name="Galle R.F."/>
            <person name="George R.A."/>
            <person name="Lewis S.E."/>
            <person name="Richards S."/>
            <person name="Ashburner M."/>
            <person name="Henderson S.N."/>
            <person name="Sutton G.G."/>
            <person name="Wortman J.R."/>
            <person name="Yandell M.D."/>
            <person name="Zhang Q."/>
            <person name="Chen L.X."/>
            <person name="Brandon R.C."/>
            <person name="Rogers Y.-H.C."/>
            <person name="Blazej R.G."/>
            <person name="Champe M."/>
            <person name="Pfeiffer B.D."/>
            <person name="Wan K.H."/>
            <person name="Doyle C."/>
            <person name="Baxter E.G."/>
            <person name="Helt G."/>
            <person name="Nelson C.R."/>
            <person name="Miklos G.L.G."/>
            <person name="Abril J.F."/>
            <person name="Agbayani A."/>
            <person name="An H.-J."/>
            <person name="Andrews-Pfannkoch C."/>
            <person name="Baldwin D."/>
            <person name="Ballew R.M."/>
            <person name="Basu A."/>
            <person name="Baxendale J."/>
            <person name="Bayraktaroglu L."/>
            <person name="Beasley E.M."/>
            <person name="Beeson K.Y."/>
            <person name="Benos P.V."/>
            <person name="Berman B.P."/>
            <person name="Bhandari D."/>
            <person name="Bolshakov S."/>
            <person name="Borkova D."/>
            <person name="Botchan M.R."/>
            <person name="Bouck J."/>
            <person name="Brokstein P."/>
            <person name="Brottier P."/>
            <person name="Burtis K.C."/>
            <person name="Busam D.A."/>
            <person name="Butler H."/>
            <person name="Cadieu E."/>
            <person name="Center A."/>
            <person name="Chandra I."/>
            <person name="Cherry J.M."/>
            <person name="Cawley S."/>
            <person name="Dahlke C."/>
            <person name="Davenport L.B."/>
            <person name="Davies P."/>
            <person name="de Pablos B."/>
            <person name="Delcher A."/>
            <person name="Deng Z."/>
            <person name="Mays A.D."/>
            <person name="Dew I."/>
            <person name="Dietz S.M."/>
            <person name="Dodson K."/>
            <person name="Doup L.E."/>
            <person name="Downes M."/>
            <person name="Dugan-Rocha S."/>
            <person name="Dunkov B.C."/>
            <person name="Dunn P."/>
            <person name="Durbin K.J."/>
            <person name="Evangelista C.C."/>
            <person name="Ferraz C."/>
            <person name="Ferriera S."/>
            <person name="Fleischmann W."/>
            <person name="Fosler C."/>
            <person name="Gabrielian A.E."/>
            <person name="Garg N.S."/>
            <person name="Gelbart W.M."/>
            <person name="Glasser K."/>
            <person name="Glodek A."/>
            <person name="Gong F."/>
            <person name="Gorrell J.H."/>
            <person name="Gu Z."/>
            <person name="Guan P."/>
            <person name="Harris M."/>
            <person name="Harris N.L."/>
            <person name="Harvey D.A."/>
            <person name="Heiman T.J."/>
            <person name="Hernandez J.R."/>
            <person name="Houck J."/>
            <person name="Hostin D."/>
            <person name="Houston K.A."/>
            <person name="Howland T.J."/>
            <person name="Wei M.-H."/>
            <person name="Ibegwam C."/>
            <person name="Jalali M."/>
            <person name="Kalush F."/>
            <person name="Karpen G.H."/>
            <person name="Ke Z."/>
            <person name="Kennison J.A."/>
            <person name="Ketchum K.A."/>
            <person name="Kimmel B.E."/>
            <person name="Kodira C.D."/>
            <person name="Kraft C.L."/>
            <person name="Kravitz S."/>
            <person name="Kulp D."/>
            <person name="Lai Z."/>
            <person name="Lasko P."/>
            <person name="Lei Y."/>
            <person name="Levitsky A.A."/>
            <person name="Li J.H."/>
            <person name="Li Z."/>
            <person name="Liang Y."/>
            <person name="Lin X."/>
            <person name="Liu X."/>
            <person name="Mattei B."/>
            <person name="McIntosh T.C."/>
            <person name="McLeod M.P."/>
            <person name="McPherson D."/>
            <person name="Merkulov G."/>
            <person name="Milshina N.V."/>
            <person name="Mobarry C."/>
            <person name="Morris J."/>
            <person name="Moshrefi A."/>
            <person name="Mount S.M."/>
            <person name="Moy M."/>
            <person name="Murphy B."/>
            <person name="Murphy L."/>
            <person name="Muzny D.M."/>
            <person name="Nelson D.L."/>
            <person name="Nelson D.R."/>
            <person name="Nelson K.A."/>
            <person name="Nixon K."/>
            <person name="Nusskern D.R."/>
            <person name="Pacleb J.M."/>
            <person name="Palazzolo M."/>
            <person name="Pittman G.S."/>
            <person name="Pan S."/>
            <person name="Pollard J."/>
            <person name="Puri V."/>
            <person name="Reese M.G."/>
            <person name="Reinert K."/>
            <person name="Remington K."/>
            <person name="Saunders R.D.C."/>
            <person name="Scheeler F."/>
            <person name="Shen H."/>
            <person name="Shue B.C."/>
            <person name="Siden-Kiamos I."/>
            <person name="Simpson M."/>
            <person name="Skupski M.P."/>
            <person name="Smith T.J."/>
            <person name="Spier E."/>
            <person name="Spradling A.C."/>
            <person name="Stapleton M."/>
            <person name="Strong R."/>
            <person name="Sun E."/>
            <person name="Svirskas R."/>
            <person name="Tector C."/>
            <person name="Turner R."/>
            <person name="Venter E."/>
            <person name="Wang A.H."/>
            <person name="Wang X."/>
            <person name="Wang Z.-Y."/>
            <person name="Wassarman D.A."/>
            <person name="Weinstock G.M."/>
            <person name="Weissenbach J."/>
            <person name="Williams S.M."/>
            <person name="Woodage T."/>
            <person name="Worley K.C."/>
            <person name="Wu D."/>
            <person name="Yang S."/>
            <person name="Yao Q.A."/>
            <person name="Ye J."/>
            <person name="Yeh R.-F."/>
            <person name="Zaveri J.S."/>
            <person name="Zhan M."/>
            <person name="Zhang G."/>
            <person name="Zhao Q."/>
            <person name="Zheng L."/>
            <person name="Zheng X.H."/>
            <person name="Zhong F.N."/>
            <person name="Zhong W."/>
            <person name="Zhou X."/>
            <person name="Zhu S.C."/>
            <person name="Zhu X."/>
            <person name="Smith H.O."/>
            <person name="Gibbs R.A."/>
            <person name="Myers E.W."/>
            <person name="Rubin G.M."/>
            <person name="Venter J.C."/>
        </authorList>
    </citation>
    <scope>NUCLEOTIDE SEQUENCE [LARGE SCALE GENOMIC DNA]</scope>
    <source>
        <strain>Berkeley</strain>
    </source>
</reference>
<reference key="3">
    <citation type="journal article" date="2002" name="Genome Biol.">
        <title>Annotation of the Drosophila melanogaster euchromatic genome: a systematic review.</title>
        <authorList>
            <person name="Misra S."/>
            <person name="Crosby M.A."/>
            <person name="Mungall C.J."/>
            <person name="Matthews B.B."/>
            <person name="Campbell K.S."/>
            <person name="Hradecky P."/>
            <person name="Huang Y."/>
            <person name="Kaminker J.S."/>
            <person name="Millburn G.H."/>
            <person name="Prochnik S.E."/>
            <person name="Smith C.D."/>
            <person name="Tupy J.L."/>
            <person name="Whitfield E.J."/>
            <person name="Bayraktaroglu L."/>
            <person name="Berman B.P."/>
            <person name="Bettencourt B.R."/>
            <person name="Celniker S.E."/>
            <person name="de Grey A.D.N.J."/>
            <person name="Drysdale R.A."/>
            <person name="Harris N.L."/>
            <person name="Richter J."/>
            <person name="Russo S."/>
            <person name="Schroeder A.J."/>
            <person name="Shu S.Q."/>
            <person name="Stapleton M."/>
            <person name="Yamada C."/>
            <person name="Ashburner M."/>
            <person name="Gelbart W.M."/>
            <person name="Rubin G.M."/>
            <person name="Lewis S.E."/>
        </authorList>
    </citation>
    <scope>GENOME REANNOTATION</scope>
    <source>
        <strain>Berkeley</strain>
    </source>
</reference>
<reference key="4">
    <citation type="journal article" date="2009" name="Nat. Biotechnol.">
        <title>Mass-spectrometric identification and relative quantification of N-linked cell surface glycoproteins.</title>
        <authorList>
            <person name="Wollscheid B."/>
            <person name="Bausch-Fluck D."/>
            <person name="Henderson C."/>
            <person name="O'Brien R."/>
            <person name="Bibel M."/>
            <person name="Schiess R."/>
            <person name="Aebersold R."/>
            <person name="Watts J.D."/>
        </authorList>
    </citation>
    <scope>GLYCOSYLATION [LARGE SCALE ANALYSIS] AT ASN-97 AND ASN-101</scope>
    <scope>IDENTIFICATION BY MASS SPECTROMETRY</scope>
</reference>
<reference key="5">
    <citation type="journal article" date="2022" name="Nat. Cell Biol.">
        <title>A role for Flower and cell death in controlling morphogen gradient scaling.</title>
        <authorList>
            <person name="Merino M.M."/>
            <person name="Seum C."/>
            <person name="Dubois M."/>
            <person name="Gonzalez-Gaitan M."/>
        </authorList>
    </citation>
    <scope>FUNCTION</scope>
    <scope>INTERACTION WITH FWE</scope>
    <scope>DEVELOPMENTAL STAGE</scope>
</reference>
<reference key="6">
    <citation type="journal article" date="2022" name="Dev. Biol.">
        <title>The feedback regulator Nord controls Dpp/BMP signaling via extracellular interaction with Dally in the Drosophila wing.</title>
        <authorList>
            <person name="Akiyama T."/>
            <person name="Seidel C.W."/>
            <person name="Gibson M.C."/>
        </authorList>
    </citation>
    <scope>FUNCTION</scope>
    <scope>INTERACTION WITH NORD</scope>
    <scope>SUBCELLULAR LOCATION</scope>
    <scope>DEVELOPMENTAL STAGE</scope>
    <scope>MUTAGENESIS OF SER-549; SER-569 AND SER-573</scope>
</reference>
<keyword id="KW-1003">Cell membrane</keyword>
<keyword id="KW-0325">Glycoprotein</keyword>
<keyword id="KW-0336">GPI-anchor</keyword>
<keyword id="KW-0357">Heparan sulfate</keyword>
<keyword id="KW-0449">Lipoprotein</keyword>
<keyword id="KW-0472">Membrane</keyword>
<keyword id="KW-0654">Proteoglycan</keyword>
<keyword id="KW-1185">Reference proteome</keyword>
<keyword id="KW-0732">Signal</keyword>
<name>DALY_DROME</name>
<accession>Q24114</accession>
<accession>Q9VSQ8</accession>
<proteinExistence type="evidence at protein level"/>
<dbReference type="EMBL" id="U31985">
    <property type="protein sequence ID" value="AAA97401.1"/>
    <property type="molecule type" value="mRNA"/>
</dbReference>
<dbReference type="EMBL" id="AE014296">
    <property type="protein sequence ID" value="AAF50358.1"/>
    <property type="molecule type" value="Genomic_DNA"/>
</dbReference>
<dbReference type="RefSeq" id="NP_001246685.1">
    <property type="nucleotide sequence ID" value="NM_001259756.2"/>
</dbReference>
<dbReference type="RefSeq" id="NP_523983.1">
    <property type="nucleotide sequence ID" value="NM_079259.4"/>
</dbReference>
<dbReference type="SMR" id="Q24114"/>
<dbReference type="BioGRID" id="64418">
    <property type="interactions" value="27"/>
</dbReference>
<dbReference type="DIP" id="DIP-23816N"/>
<dbReference type="FunCoup" id="Q24114">
    <property type="interactions" value="206"/>
</dbReference>
<dbReference type="IntAct" id="Q24114">
    <property type="interactions" value="197"/>
</dbReference>
<dbReference type="STRING" id="7227.FBpp0297069"/>
<dbReference type="GlyCosmos" id="Q24114">
    <property type="glycosylation" value="8 sites, No reported glycans"/>
</dbReference>
<dbReference type="GlyGen" id="Q24114">
    <property type="glycosylation" value="8 sites"/>
</dbReference>
<dbReference type="iPTMnet" id="Q24114"/>
<dbReference type="PaxDb" id="7227-FBpp0297069"/>
<dbReference type="DNASU" id="39013"/>
<dbReference type="EnsemblMetazoa" id="FBtr0076583">
    <property type="protein sequence ID" value="FBpp0076310"/>
    <property type="gene ID" value="FBgn0263930"/>
</dbReference>
<dbReference type="EnsemblMetazoa" id="FBtr0305901">
    <property type="protein sequence ID" value="FBpp0297069"/>
    <property type="gene ID" value="FBgn0263930"/>
</dbReference>
<dbReference type="GeneID" id="39013"/>
<dbReference type="KEGG" id="dme:Dmel_CG4974"/>
<dbReference type="AGR" id="FB:FBgn0263930"/>
<dbReference type="CTD" id="39013"/>
<dbReference type="FlyBase" id="FBgn0263930">
    <property type="gene designation" value="dally"/>
</dbReference>
<dbReference type="VEuPathDB" id="VectorBase:FBgn0263930"/>
<dbReference type="eggNOG" id="KOG3821">
    <property type="taxonomic scope" value="Eukaryota"/>
</dbReference>
<dbReference type="HOGENOM" id="CLU_024658_3_0_1"/>
<dbReference type="InParanoid" id="Q24114"/>
<dbReference type="OMA" id="PSRMMIH"/>
<dbReference type="OrthoDB" id="6380619at2759"/>
<dbReference type="PhylomeDB" id="Q24114"/>
<dbReference type="Reactome" id="R-DME-1971475">
    <property type="pathway name" value="A tetrasaccharide linker sequence is required for GAG synthesis"/>
</dbReference>
<dbReference type="Reactome" id="R-DME-2022928">
    <property type="pathway name" value="HS-GAG biosynthesis"/>
</dbReference>
<dbReference type="Reactome" id="R-DME-2024096">
    <property type="pathway name" value="HS-GAG degradation"/>
</dbReference>
<dbReference type="Reactome" id="R-DME-209471">
    <property type="pathway name" value="Formation and transport of the N-HH ligand"/>
</dbReference>
<dbReference type="Reactome" id="R-DME-381426">
    <property type="pathway name" value="Regulation of Insulin-like Growth Factor (IGF) transport and uptake by Insulin-like Growth Factor Binding Proteins (IGFBPs)"/>
</dbReference>
<dbReference type="Reactome" id="R-DME-5362798">
    <property type="pathway name" value="Release of Hh-Np from the secreting cell"/>
</dbReference>
<dbReference type="Reactome" id="R-DME-8957275">
    <property type="pathway name" value="Post-translational protein phosphorylation"/>
</dbReference>
<dbReference type="SignaLink" id="Q24114"/>
<dbReference type="BioGRID-ORCS" id="39013">
    <property type="hits" value="0 hits in 3 CRISPR screens"/>
</dbReference>
<dbReference type="GenomeRNAi" id="39013"/>
<dbReference type="PRO" id="PR:Q24114"/>
<dbReference type="Proteomes" id="UP000000803">
    <property type="component" value="Chromosome 3L"/>
</dbReference>
<dbReference type="Bgee" id="FBgn0263930">
    <property type="expression patterns" value="Expressed in cortex associated CNS glial cell (Drosophila) in post-embryonic organism and 279 other cell types or tissues"/>
</dbReference>
<dbReference type="ExpressionAtlas" id="Q24114">
    <property type="expression patterns" value="baseline and differential"/>
</dbReference>
<dbReference type="GO" id="GO:0016324">
    <property type="term" value="C:apical plasma membrane"/>
    <property type="evidence" value="ECO:0000314"/>
    <property type="project" value="FlyBase"/>
</dbReference>
<dbReference type="GO" id="GO:0016323">
    <property type="term" value="C:basolateral plasma membrane"/>
    <property type="evidence" value="ECO:0000314"/>
    <property type="project" value="FlyBase"/>
</dbReference>
<dbReference type="GO" id="GO:0009986">
    <property type="term" value="C:cell surface"/>
    <property type="evidence" value="ECO:0000314"/>
    <property type="project" value="FlyBase"/>
</dbReference>
<dbReference type="GO" id="GO:0009897">
    <property type="term" value="C:external side of plasma membrane"/>
    <property type="evidence" value="ECO:0000315"/>
    <property type="project" value="FlyBase"/>
</dbReference>
<dbReference type="GO" id="GO:0098595">
    <property type="term" value="C:perivitelline space"/>
    <property type="evidence" value="ECO:0007005"/>
    <property type="project" value="FlyBase"/>
</dbReference>
<dbReference type="GO" id="GO:0005886">
    <property type="term" value="C:plasma membrane"/>
    <property type="evidence" value="ECO:0000304"/>
    <property type="project" value="Reactome"/>
</dbReference>
<dbReference type="GO" id="GO:0007409">
    <property type="term" value="P:axonogenesis"/>
    <property type="evidence" value="ECO:0000315"/>
    <property type="project" value="FlyBase"/>
</dbReference>
<dbReference type="GO" id="GO:0016477">
    <property type="term" value="P:cell migration"/>
    <property type="evidence" value="ECO:0000318"/>
    <property type="project" value="GO_Central"/>
</dbReference>
<dbReference type="GO" id="GO:0022416">
    <property type="term" value="P:chaeta development"/>
    <property type="evidence" value="ECO:0000315"/>
    <property type="project" value="FlyBase"/>
</dbReference>
<dbReference type="GO" id="GO:0008407">
    <property type="term" value="P:chaeta morphogenesis"/>
    <property type="evidence" value="ECO:0000315"/>
    <property type="project" value="FlyBase"/>
</dbReference>
<dbReference type="GO" id="GO:0048749">
    <property type="term" value="P:compound eye development"/>
    <property type="evidence" value="ECO:0000315"/>
    <property type="project" value="FlyBase"/>
</dbReference>
<dbReference type="GO" id="GO:0048813">
    <property type="term" value="P:dendrite morphogenesis"/>
    <property type="evidence" value="ECO:0000315"/>
    <property type="project" value="FlyBase"/>
</dbReference>
<dbReference type="GO" id="GO:0007427">
    <property type="term" value="P:epithelial cell migration, open tracheal system"/>
    <property type="evidence" value="ECO:0000316"/>
    <property type="project" value="FlyBase"/>
</dbReference>
<dbReference type="GO" id="GO:0035592">
    <property type="term" value="P:establishment of protein localization to extracellular region"/>
    <property type="evidence" value="ECO:0000315"/>
    <property type="project" value="FlyBase"/>
</dbReference>
<dbReference type="GO" id="GO:0048132">
    <property type="term" value="P:female germ-line stem cell asymmetric division"/>
    <property type="evidence" value="ECO:0000315"/>
    <property type="project" value="FlyBase"/>
</dbReference>
<dbReference type="GO" id="GO:0030718">
    <property type="term" value="P:germ-line stem cell population maintenance"/>
    <property type="evidence" value="ECO:0000315"/>
    <property type="project" value="FlyBase"/>
</dbReference>
<dbReference type="GO" id="GO:0007480">
    <property type="term" value="P:imaginal disc-derived leg morphogenesis"/>
    <property type="evidence" value="ECO:0000315"/>
    <property type="project" value="FlyBase"/>
</dbReference>
<dbReference type="GO" id="GO:0008586">
    <property type="term" value="P:imaginal disc-derived wing vein morphogenesis"/>
    <property type="evidence" value="ECO:0000315"/>
    <property type="project" value="FlyBase"/>
</dbReference>
<dbReference type="GO" id="GO:0071694">
    <property type="term" value="P:maintenance of protein location in extracellular region"/>
    <property type="evidence" value="ECO:0000315"/>
    <property type="project" value="FlyBase"/>
</dbReference>
<dbReference type="GO" id="GO:0008045">
    <property type="term" value="P:motor neuron axon guidance"/>
    <property type="evidence" value="ECO:0000315"/>
    <property type="project" value="FlyBase"/>
</dbReference>
<dbReference type="GO" id="GO:0002091">
    <property type="term" value="P:negative regulation of receptor internalization"/>
    <property type="evidence" value="ECO:0000315"/>
    <property type="project" value="FlyBase"/>
</dbReference>
<dbReference type="GO" id="GO:2001261">
    <property type="term" value="P:negative regulation of semaphorin-plexin signaling pathway"/>
    <property type="evidence" value="ECO:0000316"/>
    <property type="project" value="FlyBase"/>
</dbReference>
<dbReference type="GO" id="GO:0030513">
    <property type="term" value="P:positive regulation of BMP signaling pathway"/>
    <property type="evidence" value="ECO:0000315"/>
    <property type="project" value="FlyBase"/>
</dbReference>
<dbReference type="GO" id="GO:0090263">
    <property type="term" value="P:positive regulation of canonical Wnt signaling pathway"/>
    <property type="evidence" value="ECO:0000316"/>
    <property type="project" value="FlyBase"/>
</dbReference>
<dbReference type="GO" id="GO:0045743">
    <property type="term" value="P:positive regulation of fibroblast growth factor receptor signaling pathway"/>
    <property type="evidence" value="ECO:0000316"/>
    <property type="project" value="FlyBase"/>
</dbReference>
<dbReference type="GO" id="GO:0045880">
    <property type="term" value="P:positive regulation of smoothened signaling pathway"/>
    <property type="evidence" value="ECO:0000315"/>
    <property type="project" value="FlyBase"/>
</dbReference>
<dbReference type="GO" id="GO:0051726">
    <property type="term" value="P:regulation of cell cycle"/>
    <property type="evidence" value="ECO:0000315"/>
    <property type="project" value="FlyBase"/>
</dbReference>
<dbReference type="GO" id="GO:0045570">
    <property type="term" value="P:regulation of imaginal disc growth"/>
    <property type="evidence" value="ECO:0000315"/>
    <property type="project" value="FlyBase"/>
</dbReference>
<dbReference type="GO" id="GO:1905475">
    <property type="term" value="P:regulation of protein localization to membrane"/>
    <property type="evidence" value="ECO:0000318"/>
    <property type="project" value="GO_Central"/>
</dbReference>
<dbReference type="GO" id="GO:0007367">
    <property type="term" value="P:segment polarity determination"/>
    <property type="evidence" value="ECO:0000315"/>
    <property type="project" value="FlyBase"/>
</dbReference>
<dbReference type="GO" id="GO:0008052">
    <property type="term" value="P:sensory organ boundary specification"/>
    <property type="evidence" value="ECO:0000315"/>
    <property type="project" value="FlyBase"/>
</dbReference>
<dbReference type="GO" id="GO:0048100">
    <property type="term" value="P:wing disc anterior/posterior pattern formation"/>
    <property type="evidence" value="ECO:0000315"/>
    <property type="project" value="FlyBase"/>
</dbReference>
<dbReference type="GO" id="GO:0035220">
    <property type="term" value="P:wing disc development"/>
    <property type="evidence" value="ECO:0000315"/>
    <property type="project" value="FlyBase"/>
</dbReference>
<dbReference type="GO" id="GO:0048190">
    <property type="term" value="P:wing disc dorsal/ventral pattern formation"/>
    <property type="evidence" value="ECO:0000315"/>
    <property type="project" value="FlyBase"/>
</dbReference>
<dbReference type="GO" id="GO:0007472">
    <property type="term" value="P:wing disc morphogenesis"/>
    <property type="evidence" value="ECO:0000315"/>
    <property type="project" value="FlyBase"/>
</dbReference>
<dbReference type="GO" id="GO:0035222">
    <property type="term" value="P:wing disc pattern formation"/>
    <property type="evidence" value="ECO:0000315"/>
    <property type="project" value="FlyBase"/>
</dbReference>
<dbReference type="InterPro" id="IPR001863">
    <property type="entry name" value="Glypican"/>
</dbReference>
<dbReference type="PANTHER" id="PTHR10822:SF29">
    <property type="entry name" value="DIVISION ABNORMALLY DELAYED PROTEIN"/>
    <property type="match status" value="1"/>
</dbReference>
<dbReference type="PANTHER" id="PTHR10822">
    <property type="entry name" value="GLYPICAN"/>
    <property type="match status" value="1"/>
</dbReference>
<dbReference type="Pfam" id="PF01153">
    <property type="entry name" value="Glypican"/>
    <property type="match status" value="1"/>
</dbReference>